<dbReference type="EC" id="4.2.2.2" evidence="4 5"/>
<dbReference type="EMBL" id="AB106865">
    <property type="protein sequence ID" value="BAC87940.1"/>
    <property type="molecule type" value="Genomic_DNA"/>
</dbReference>
<dbReference type="SMR" id="Q76EC9"/>
<dbReference type="CAZy" id="PL9">
    <property type="family name" value="Polysaccharide Lyase Family 9"/>
</dbReference>
<dbReference type="BRENDA" id="4.2.2.2">
    <property type="organism ID" value="1520"/>
</dbReference>
<dbReference type="GO" id="GO:0005576">
    <property type="term" value="C:extracellular region"/>
    <property type="evidence" value="ECO:0000314"/>
    <property type="project" value="UniProtKB"/>
</dbReference>
<dbReference type="GO" id="GO:0046872">
    <property type="term" value="F:metal ion binding"/>
    <property type="evidence" value="ECO:0007669"/>
    <property type="project" value="UniProtKB-KW"/>
</dbReference>
<dbReference type="GO" id="GO:0030570">
    <property type="term" value="F:pectate lyase activity"/>
    <property type="evidence" value="ECO:0000314"/>
    <property type="project" value="UniProtKB"/>
</dbReference>
<dbReference type="GO" id="GO:0052009">
    <property type="term" value="P:symbiont-mediated disruption of host cell wall"/>
    <property type="evidence" value="ECO:0000314"/>
    <property type="project" value="UniProtKB"/>
</dbReference>
<dbReference type="Gene3D" id="2.60.40.3630">
    <property type="match status" value="4"/>
</dbReference>
<dbReference type="Gene3D" id="2.160.20.10">
    <property type="entry name" value="Single-stranded right-handed beta-helix, Pectin lyase-like"/>
    <property type="match status" value="1"/>
</dbReference>
<dbReference type="InterPro" id="IPR022038">
    <property type="entry name" value="Ig-like_bact"/>
</dbReference>
<dbReference type="InterPro" id="IPR012334">
    <property type="entry name" value="Pectin_lyas_fold"/>
</dbReference>
<dbReference type="InterPro" id="IPR011050">
    <property type="entry name" value="Pectin_lyase_fold/virulence"/>
</dbReference>
<dbReference type="InterPro" id="IPR052052">
    <property type="entry name" value="Polysaccharide_Lyase_9"/>
</dbReference>
<dbReference type="PANTHER" id="PTHR40088">
    <property type="entry name" value="PECTATE LYASE (EUROFUNG)"/>
    <property type="match status" value="1"/>
</dbReference>
<dbReference type="PANTHER" id="PTHR40088:SF1">
    <property type="entry name" value="PECTATE LYASE PEL9"/>
    <property type="match status" value="1"/>
</dbReference>
<dbReference type="Pfam" id="PF07523">
    <property type="entry name" value="Big_3"/>
    <property type="match status" value="4"/>
</dbReference>
<dbReference type="SUPFAM" id="SSF51126">
    <property type="entry name" value="Pectin lyase-like"/>
    <property type="match status" value="1"/>
</dbReference>
<organism evidence="9">
    <name type="scientific">Thermoclostridium stercorarium</name>
    <name type="common">Clostridium stercorarium</name>
    <dbReference type="NCBI Taxonomy" id="1510"/>
    <lineage>
        <taxon>Bacteria</taxon>
        <taxon>Bacillati</taxon>
        <taxon>Bacillota</taxon>
        <taxon>Clostridia</taxon>
        <taxon>Eubacteriales</taxon>
        <taxon>Oscillospiraceae</taxon>
        <taxon>Thermoclostridium</taxon>
    </lineage>
</organism>
<comment type="function">
    <text evidence="4 5">Cleaves polygalacturonate or partially methylated pectin (PubMed:16306696, PubMed:16556983). When assayed on polygalacturonate or on pectin, it releases monogalacturonate as the principal product (PubMed:16556983).</text>
</comment>
<comment type="catalytic activity">
    <reaction evidence="4 5">
        <text>Eliminative cleavage of (1-&gt;4)-alpha-D-galacturonan to give oligosaccharides with 4-deoxy-alpha-D-galact-4-enuronosyl groups at their non-reducing ends.</text>
        <dbReference type="EC" id="4.2.2.2"/>
    </reaction>
</comment>
<comment type="cofactor">
    <cofactor evidence="4 5">
        <name>Ca(2+)</name>
        <dbReference type="ChEBI" id="CHEBI:29108"/>
    </cofactor>
</comment>
<comment type="activity regulation">
    <text evidence="4 5">Inhibited by the metal chelator ethylenediaminetetraacetic acid (EDTA).</text>
</comment>
<comment type="biophysicochemical properties">
    <phDependence>
        <text evidence="4">Optimum pH is 7.</text>
    </phDependence>
    <temperatureDependence>
        <text evidence="4">Optimum temperature is 65 degrees Celsius.</text>
    </temperatureDependence>
</comment>
<comment type="subcellular location">
    <subcellularLocation>
        <location evidence="4">Secreted</location>
    </subcellularLocation>
</comment>
<comment type="induction">
    <text evidence="4">Appears to be constitutively expressed in various carbon sources.</text>
</comment>
<comment type="similarity">
    <text evidence="8">Belongs to the polysaccharide lyase 9 family.</text>
</comment>
<keyword id="KW-0106">Calcium</keyword>
<keyword id="KW-0456">Lyase</keyword>
<keyword id="KW-0479">Metal-binding</keyword>
<keyword id="KW-0964">Secreted</keyword>
<keyword id="KW-0732">Signal</keyword>
<reference evidence="9" key="1">
    <citation type="journal article" date="2005" name="Biosci. Biotechnol. Biochem.">
        <title>A novel thermophilic pectate lyase containing two catalytic modules of Clostridium stercorarium.</title>
        <authorList>
            <person name="Hla S.S."/>
            <person name="Kurokawa J."/>
            <person name="Suryani S."/>
            <person name="Kimura T."/>
            <person name="Ohmiya K."/>
            <person name="Sakka K."/>
        </authorList>
    </citation>
    <scope>NUCLEOTIDE SEQUENCE [GENOMIC DNA]</scope>
    <scope>FUNCTION</scope>
    <scope>CATALYTIC ACTIVITY</scope>
    <scope>COFACTOR</scope>
    <scope>ACTIVITY REGULATION</scope>
    <scope>BIOPHYSICOCHEMICAL PROPERTIES</scope>
    <scope>SUBCELLULAR LOCATION</scope>
    <scope>INDUCTION</scope>
    <source>
        <strain evidence="6">F-9</strain>
    </source>
</reference>
<reference evidence="8" key="2">
    <citation type="journal article" date="2006" name="Biosci. Biotechnol. Biochem.">
        <title>Enzymatic properties of two catalytic modules of Clostridium stercorarium pectate lyase Pel9A.</title>
        <authorList>
            <person name="Hla S.S."/>
            <person name="Kikuta T."/>
            <person name="Sakka M."/>
            <person name="Kimura T."/>
            <person name="Sakka K."/>
        </authorList>
    </citation>
    <scope>FUNCTION</scope>
    <scope>CATALYTIC ACTIVITY</scope>
    <scope>COFACTOR</scope>
    <scope>ACTIVITY REGULATION</scope>
    <source>
        <strain evidence="7">F-9</strain>
    </source>
</reference>
<gene>
    <name evidence="6" type="primary">pel9A</name>
    <name evidence="8" type="synonym">pelL</name>
</gene>
<sequence>MRNCKGLSILLCFLLVFFAMPFPAVAEEAEAMPVSEASEWSFSAFGSNTSVEKNPDPMINSDGSVKIVANGGKIASNEQGISFYYREVPSDANFEIKAKAEVLNFKGDDKQVSFGLMLMDQIGQHRNSEKHNSNYIAVGALDTIIKAFYMQESLTKTDMLSQTPSQGDIFELSIKKSGDNYVLTCNGTTETFTLPGLFSDTIYVGIYAARNAEIKFSDLNFTLDTKDIVDLSVDLSGMKTSYLVDEPLNLKGLKVTAHYSDGTSEELTEEDYIVTGFDSSTPGTNTICINVGEISKTIDLEILPLTCTKLTVKYLPAKTDYYLGDSFNPEGLKVIAEYNDGYKVTELTEDKYALYIAGKAAEDYVFSKAGTQKVEVISRENPSVKTGFEVNISDASIESLEISRKPEKTAYFIGDEPDLTGLVVYARYSDGSKVRLDKSEYEVKGFDSSAPGEKEITVYHKGKTVAFSVVVKEKEVMGIEVTKYPKTTYYIGETFNAEGLEVSKVYDNGDREPLTDFSVDASAFDGSTPGVYDVIISADGFDPITLKVTVREKTEYEWKAIRFGQSTSDSKNYVNFLDNGAVEIVALEGGGKIATDHDGITFYYTEIDAKDNFVLSADIKVKEYAKNPHDGQESFGIMARDAIGTPGDSSIFASNIAAIGGFSGGTKSPNGTQLFIRTGVSSPDGAGSKGIRRIMIKDEKPGPDNTYPAAEYRLTLAKTNSGFVGKLNDGEEVIFYEPDILNVQDSKIYVGFFAARLATIEVSNIELYVSSSETDAPRYIPPEAPVTPSLQILSLDKTSNVNYSLVVKPNVNGSITVKQGAEILVRDVTVNAGEKYSVDAVLEKNSENPFTVIFIPDDTQNLSSYEKIIKNFSVTMRTYNEGGNIYVSPNGTPYGDGTKDNPLDLDTAIAFVKEGQKIILMNGVYKRDSALVISRYNDGTAENRKYLVAEPGSRPVIDFDKKGQGVTLSGNYWYIEGIDFARSAPNYPGFIIGGNYNIVENCRFYENGDTGLQISRTDSSENIAEWPSYNKIINCESFDNRDPSENNADGFAAKLTCGVGNMFIGCVSHHNIDDGWDLYTKAGTGAIGPVIIDSCIAYENGTLTDGTVGKGDKNGFKLGGEGVPVQHIIKNSIAFNNGAVGFTSNSNPSVIAINNIAYNNAKGNLVFTSYSGIETHFVVDGFVSYNTEGAPRDSATGVPASDDNYLFDGTKSVNKSGEELTEKEFIERLLELISKIKSIK</sequence>
<feature type="signal peptide" evidence="3">
    <location>
        <begin position="1"/>
        <end position="26"/>
    </location>
</feature>
<feature type="chain" id="PRO_5004287406" description="Pectate lyase L" evidence="3">
    <location>
        <begin position="27"/>
        <end position="1240"/>
    </location>
</feature>
<feature type="region of interest" description="Has catalytic activity" evidence="5">
    <location>
        <begin position="27"/>
        <end position="551"/>
    </location>
</feature>
<feature type="region of interest" description="Has catalytic activity" evidence="5">
    <location>
        <begin position="545"/>
        <end position="1240"/>
    </location>
</feature>
<feature type="active site" description="Proton acceptor" evidence="2">
    <location>
        <position position="1117"/>
    </location>
</feature>
<feature type="binding site" evidence="2">
    <location>
        <position position="325"/>
    </location>
    <ligand>
        <name>Ca(2+)</name>
        <dbReference type="ChEBI" id="CHEBI:29108"/>
        <label>1</label>
    </ligand>
</feature>
<feature type="binding site" evidence="2">
    <location>
        <position position="349"/>
    </location>
    <ligand>
        <name>Ca(2+)</name>
        <dbReference type="ChEBI" id="CHEBI:29108"/>
        <label>1</label>
    </ligand>
</feature>
<feature type="binding site" evidence="2">
    <location>
        <position position="350"/>
    </location>
    <ligand>
        <name>Ca(2+)</name>
        <dbReference type="ChEBI" id="CHEBI:29108"/>
        <label>1</label>
    </ligand>
</feature>
<feature type="binding site" evidence="2">
    <location>
        <position position="1049"/>
    </location>
    <ligand>
        <name>Ca(2+)</name>
        <dbReference type="ChEBI" id="CHEBI:29108"/>
        <label>1</label>
    </ligand>
</feature>
<feature type="binding site" evidence="2">
    <location>
        <position position="1073"/>
    </location>
    <ligand>
        <name>Ca(2+)</name>
        <dbReference type="ChEBI" id="CHEBI:29108"/>
        <label>1</label>
    </ligand>
</feature>
<feature type="binding site" evidence="2">
    <location>
        <position position="1074"/>
    </location>
    <ligand>
        <name>Ca(2+)</name>
        <dbReference type="ChEBI" id="CHEBI:29108"/>
        <label>1</label>
    </ligand>
</feature>
<feature type="binding site" evidence="2">
    <location>
        <position position="1077"/>
    </location>
    <ligand>
        <name>Ca(2+)</name>
        <dbReference type="ChEBI" id="CHEBI:29108"/>
        <label>1</label>
    </ligand>
</feature>
<proteinExistence type="evidence at protein level"/>
<evidence type="ECO:0000250" key="1">
    <source>
        <dbReference type="UniProtKB" id="P0C1A6"/>
    </source>
</evidence>
<evidence type="ECO:0000250" key="2">
    <source>
        <dbReference type="UniProtKB" id="P0C1A7"/>
    </source>
</evidence>
<evidence type="ECO:0000255" key="3"/>
<evidence type="ECO:0000269" key="4">
    <source>
    </source>
</evidence>
<evidence type="ECO:0000269" key="5">
    <source>
    </source>
</evidence>
<evidence type="ECO:0000303" key="6">
    <source>
    </source>
</evidence>
<evidence type="ECO:0000303" key="7">
    <source>
    </source>
</evidence>
<evidence type="ECO:0000305" key="8"/>
<evidence type="ECO:0000312" key="9">
    <source>
        <dbReference type="EMBL" id="BAC87940.1"/>
    </source>
</evidence>
<protein>
    <recommendedName>
        <fullName evidence="1">Pectate lyase L</fullName>
        <ecNumber evidence="4 5">4.2.2.2</ecNumber>
    </recommendedName>
</protein>
<accession>Q76EC9</accession>
<name>PLYL_THEST</name>